<organism>
    <name type="scientific">Sulfolobus acidocaldarius (strain ATCC 33909 / DSM 639 / JCM 8929 / NBRC 15157 / NCIMB 11770)</name>
    <dbReference type="NCBI Taxonomy" id="330779"/>
    <lineage>
        <taxon>Archaea</taxon>
        <taxon>Thermoproteota</taxon>
        <taxon>Thermoprotei</taxon>
        <taxon>Sulfolobales</taxon>
        <taxon>Sulfolobaceae</taxon>
        <taxon>Sulfolobus</taxon>
    </lineage>
</organism>
<feature type="chain" id="PRO_0000133764" description="Large ribosomal subunit protein uL13">
    <location>
        <begin position="1"/>
        <end position="148"/>
    </location>
</feature>
<feature type="sequence conflict" description="In Ref. 1; CAA56482." evidence="2" ref="1">
    <location>
        <begin position="110"/>
        <end position="112"/>
    </location>
</feature>
<evidence type="ECO:0000255" key="1">
    <source>
        <dbReference type="HAMAP-Rule" id="MF_01366"/>
    </source>
</evidence>
<evidence type="ECO:0000305" key="2"/>
<comment type="function">
    <text evidence="1">This protein is one of the early assembly proteins of the 50S ribosomal subunit, although it is not seen to bind rRNA by itself. It is important during the early stages of 50S assembly.</text>
</comment>
<comment type="subunit">
    <text evidence="1">Part of the 50S ribosomal subunit.</text>
</comment>
<comment type="similarity">
    <text evidence="1">Belongs to the universal ribosomal protein uL13 family.</text>
</comment>
<gene>
    <name evidence="1" type="primary">rpl13</name>
    <name type="ordered locus">Saci_0085</name>
</gene>
<accession>P39473</accession>
<accession>Q4JCG7</accession>
<proteinExistence type="evidence at protein level"/>
<reference key="1">
    <citation type="journal article" date="1995" name="Proc. Natl. Acad. Sci. U.S.A.">
        <title>Transcription in archaea: similarity to that in eucarya.</title>
        <authorList>
            <person name="Langer D."/>
            <person name="Hain J."/>
            <person name="Thuriaux P."/>
            <person name="Zillig W."/>
        </authorList>
    </citation>
    <scope>NUCLEOTIDE SEQUENCE [GENOMIC DNA]</scope>
    <source>
        <strain>ATCC 33909 / DSM 639 / JCM 8929 / NBRC 15157 / NCIMB 11770</strain>
    </source>
</reference>
<reference key="2">
    <citation type="journal article" date="2005" name="J. Bacteriol.">
        <title>The genome of Sulfolobus acidocaldarius, a model organism of the Crenarchaeota.</title>
        <authorList>
            <person name="Chen L."/>
            <person name="Bruegger K."/>
            <person name="Skovgaard M."/>
            <person name="Redder P."/>
            <person name="She Q."/>
            <person name="Torarinsson E."/>
            <person name="Greve B."/>
            <person name="Awayez M."/>
            <person name="Zibat A."/>
            <person name="Klenk H.-P."/>
            <person name="Garrett R.A."/>
        </authorList>
    </citation>
    <scope>NUCLEOTIDE SEQUENCE [LARGE SCALE GENOMIC DNA]</scope>
    <source>
        <strain>ATCC 33909 / DSM 639 / JCM 8929 / NBRC 15157 / NCIMB 11770</strain>
    </source>
</reference>
<sequence>MSSQEEIVIVDATNQILGRMSTHIAKLLKSGKKVYVVNAEKAIISGPRSRVLEGYSLLFTVKTMQNPYRQGIRRPRNPINIVKRTVRGMLPKNKLGKQIYRNLKAYIGIPKELEGKSMIRFDDADVSRLKGKYITVAELSRLLGGLKQ</sequence>
<keyword id="KW-0002">3D-structure</keyword>
<keyword id="KW-1185">Reference proteome</keyword>
<keyword id="KW-0687">Ribonucleoprotein</keyword>
<keyword id="KW-0689">Ribosomal protein</keyword>
<protein>
    <recommendedName>
        <fullName evidence="1">Large ribosomal subunit protein uL13</fullName>
    </recommendedName>
    <alternativeName>
        <fullName evidence="2">50S ribosomal protein L13</fullName>
    </alternativeName>
</protein>
<dbReference type="EMBL" id="X80194">
    <property type="protein sequence ID" value="CAA56482.1"/>
    <property type="molecule type" value="Genomic_DNA"/>
</dbReference>
<dbReference type="EMBL" id="CP000077">
    <property type="protein sequence ID" value="AAY79512.1"/>
    <property type="molecule type" value="Genomic_DNA"/>
</dbReference>
<dbReference type="PIR" id="S47025">
    <property type="entry name" value="S47025"/>
</dbReference>
<dbReference type="RefSeq" id="WP_011277013.1">
    <property type="nucleotide sequence ID" value="NC_007181.1"/>
</dbReference>
<dbReference type="PDB" id="8HKU">
    <property type="method" value="EM"/>
    <property type="resolution" value="2.72 A"/>
    <property type="chains" value="L13P=8-147"/>
</dbReference>
<dbReference type="PDB" id="8HKV">
    <property type="method" value="EM"/>
    <property type="resolution" value="4.94 A"/>
    <property type="chains" value="L13P=8-147"/>
</dbReference>
<dbReference type="PDB" id="8HKY">
    <property type="method" value="EM"/>
    <property type="resolution" value="4.45 A"/>
    <property type="chains" value="L13P=8-147"/>
</dbReference>
<dbReference type="PDB" id="8HKZ">
    <property type="method" value="EM"/>
    <property type="resolution" value="4.78 A"/>
    <property type="chains" value="L13P=8-147"/>
</dbReference>
<dbReference type="PDB" id="8HL1">
    <property type="method" value="EM"/>
    <property type="resolution" value="3.93 A"/>
    <property type="chains" value="L13P=8-147"/>
</dbReference>
<dbReference type="PDB" id="8HL2">
    <property type="method" value="EM"/>
    <property type="resolution" value="4.10 A"/>
    <property type="chains" value="L13P=8-147"/>
</dbReference>
<dbReference type="PDB" id="8HL3">
    <property type="method" value="EM"/>
    <property type="resolution" value="4.80 A"/>
    <property type="chains" value="L13P=8-147"/>
</dbReference>
<dbReference type="PDB" id="8HL4">
    <property type="method" value="EM"/>
    <property type="resolution" value="4.62 A"/>
    <property type="chains" value="L13P=8-147"/>
</dbReference>
<dbReference type="PDB" id="8HL5">
    <property type="method" value="EM"/>
    <property type="resolution" value="5.72 A"/>
    <property type="chains" value="L13P=8-147"/>
</dbReference>
<dbReference type="PDBsum" id="8HKU"/>
<dbReference type="PDBsum" id="8HKV"/>
<dbReference type="PDBsum" id="8HKY"/>
<dbReference type="PDBsum" id="8HKZ"/>
<dbReference type="PDBsum" id="8HL1"/>
<dbReference type="PDBsum" id="8HL2"/>
<dbReference type="PDBsum" id="8HL3"/>
<dbReference type="PDBsum" id="8HL4"/>
<dbReference type="PDBsum" id="8HL5"/>
<dbReference type="EMDB" id="EMD-34860"/>
<dbReference type="EMDB" id="EMD-34861"/>
<dbReference type="EMDB" id="EMD-34863"/>
<dbReference type="EMDB" id="EMD-34864"/>
<dbReference type="EMDB" id="EMD-34866"/>
<dbReference type="EMDB" id="EMD-34867"/>
<dbReference type="EMDB" id="EMD-34868"/>
<dbReference type="EMDB" id="EMD-34869"/>
<dbReference type="EMDB" id="EMD-34870"/>
<dbReference type="SMR" id="P39473"/>
<dbReference type="STRING" id="330779.Saci_0085"/>
<dbReference type="GeneID" id="14550615"/>
<dbReference type="KEGG" id="sai:Saci_0085"/>
<dbReference type="PATRIC" id="fig|330779.12.peg.79"/>
<dbReference type="eggNOG" id="arCOG04242">
    <property type="taxonomic scope" value="Archaea"/>
</dbReference>
<dbReference type="HOGENOM" id="CLU_076922_1_0_2"/>
<dbReference type="Proteomes" id="UP000001018">
    <property type="component" value="Chromosome"/>
</dbReference>
<dbReference type="GO" id="GO:0022625">
    <property type="term" value="C:cytosolic large ribosomal subunit"/>
    <property type="evidence" value="ECO:0007669"/>
    <property type="project" value="TreeGrafter"/>
</dbReference>
<dbReference type="GO" id="GO:0003729">
    <property type="term" value="F:mRNA binding"/>
    <property type="evidence" value="ECO:0007669"/>
    <property type="project" value="TreeGrafter"/>
</dbReference>
<dbReference type="GO" id="GO:0003735">
    <property type="term" value="F:structural constituent of ribosome"/>
    <property type="evidence" value="ECO:0007669"/>
    <property type="project" value="InterPro"/>
</dbReference>
<dbReference type="GO" id="GO:0017148">
    <property type="term" value="P:negative regulation of translation"/>
    <property type="evidence" value="ECO:0007669"/>
    <property type="project" value="TreeGrafter"/>
</dbReference>
<dbReference type="GO" id="GO:0006412">
    <property type="term" value="P:translation"/>
    <property type="evidence" value="ECO:0007669"/>
    <property type="project" value="UniProtKB-UniRule"/>
</dbReference>
<dbReference type="CDD" id="cd00392">
    <property type="entry name" value="Ribosomal_L13"/>
    <property type="match status" value="1"/>
</dbReference>
<dbReference type="Gene3D" id="3.90.1180.10">
    <property type="entry name" value="Ribosomal protein L13"/>
    <property type="match status" value="1"/>
</dbReference>
<dbReference type="HAMAP" id="MF_01366">
    <property type="entry name" value="Ribosomal_uL13"/>
    <property type="match status" value="1"/>
</dbReference>
<dbReference type="InterPro" id="IPR005822">
    <property type="entry name" value="Ribosomal_uL13"/>
</dbReference>
<dbReference type="InterPro" id="IPR005823">
    <property type="entry name" value="Ribosomal_uL13_bac-type"/>
</dbReference>
<dbReference type="InterPro" id="IPR023563">
    <property type="entry name" value="Ribosomal_uL13_CS"/>
</dbReference>
<dbReference type="InterPro" id="IPR005755">
    <property type="entry name" value="Ribosomal_uL13_euk/arc"/>
</dbReference>
<dbReference type="InterPro" id="IPR036899">
    <property type="entry name" value="Ribosomal_uL13_sf"/>
</dbReference>
<dbReference type="NCBIfam" id="TIGR01077">
    <property type="entry name" value="L13_A_E"/>
    <property type="match status" value="1"/>
</dbReference>
<dbReference type="NCBIfam" id="NF005004">
    <property type="entry name" value="PRK06394.1"/>
    <property type="match status" value="1"/>
</dbReference>
<dbReference type="PANTHER" id="PTHR11545:SF3">
    <property type="entry name" value="LARGE RIBOSOMAL SUBUNIT PROTEIN UL13"/>
    <property type="match status" value="1"/>
</dbReference>
<dbReference type="PANTHER" id="PTHR11545">
    <property type="entry name" value="RIBOSOMAL PROTEIN L13"/>
    <property type="match status" value="1"/>
</dbReference>
<dbReference type="Pfam" id="PF00572">
    <property type="entry name" value="Ribosomal_L13"/>
    <property type="match status" value="1"/>
</dbReference>
<dbReference type="PIRSF" id="PIRSF002181">
    <property type="entry name" value="Ribosomal_L13"/>
    <property type="match status" value="1"/>
</dbReference>
<dbReference type="SUPFAM" id="SSF52161">
    <property type="entry name" value="Ribosomal protein L13"/>
    <property type="match status" value="1"/>
</dbReference>
<dbReference type="PROSITE" id="PS00783">
    <property type="entry name" value="RIBOSOMAL_L13"/>
    <property type="match status" value="1"/>
</dbReference>
<name>RL13_SULAC</name>